<protein>
    <recommendedName>
        <fullName>Precorrin-6Y C(5,15)-methyltransferase [decarboxylating]</fullName>
        <shortName>Precorrin-6 methyltransferase</shortName>
        <shortName>Precorrin-6Y methylase</shortName>
        <ecNumber>2.1.1.132</ecNumber>
    </recommendedName>
</protein>
<name>COBL_SINSX</name>
<comment type="function">
    <text>Catalyzes the methylation of both C-5 and C-15 in precorrin-6Y to form precorrin-8X.</text>
</comment>
<comment type="catalytic activity">
    <reaction>
        <text>precorrin-6B + 2 S-adenosyl-L-methionine = precorrin-8X + 2 S-adenosyl-L-homocysteine + CO2 + 3 H(+)</text>
        <dbReference type="Rhea" id="RHEA:17477"/>
        <dbReference type="ChEBI" id="CHEBI:15378"/>
        <dbReference type="ChEBI" id="CHEBI:16526"/>
        <dbReference type="ChEBI" id="CHEBI:57856"/>
        <dbReference type="ChEBI" id="CHEBI:58532"/>
        <dbReference type="ChEBI" id="CHEBI:58581"/>
        <dbReference type="ChEBI" id="CHEBI:59789"/>
        <dbReference type="EC" id="2.1.1.132"/>
    </reaction>
</comment>
<comment type="pathway">
    <text>Cofactor biosynthesis; adenosylcobalamin biosynthesis; cob(II)yrinate a,c-diamide from precorrin-2 (aerobic route): step 7/10.</text>
</comment>
<comment type="similarity">
    <text evidence="1">Belongs to the precorrin methyltransferase family.</text>
</comment>
<comment type="caution">
    <text evidence="1">Was originally thought to originate from Pseudomonas denitrificans, but similarity searches show that the sequence is much closer to Sinorhizobium. The entry's taxonomy has been changed.</text>
</comment>
<feature type="chain" id="PRO_0000150408" description="Precorrin-6Y C(5,15)-methyltransferase [decarboxylating]">
    <location>
        <begin position="1"/>
        <end position="413"/>
    </location>
</feature>
<sequence>MADVSNSEPAIVSPWLTVIGIGEDGVAGLGDEAKRLIAEAPVVYGGHRHLELAASLITGEAHNWLSPLERSVVEIVARRGSPVVVLASGDPFFFGVGVTLARRIASAEIRTLPAPSSISLAASRLGWALQDATLVSVHGRPLDLVRPHLHPGARVLTLTSDGAGPRDLAELLVSSGFGQSRLTVLEALGGAGERVTTQIAARFMLGLVHPLNVCAIEVAADEGARILPLAAGRDDALFEHDGQITKREVRALTLSALAPRKGELLWDIGGGSGSIGIEWMLADPTMQAITIEVEPERAARIGRNATMFGVPGLTVVEGEAPAALAGLPQPDAIFIGGGGSEDGVMEAAIEALKSGGRLVANAVTTDMEAVLLDHHARLGGSLIRIDIARAGPIGGMTGWKPAMPVTQWSWTKG</sequence>
<proteinExistence type="evidence at protein level"/>
<reference key="1">
    <citation type="journal article" date="1990" name="J. Bacteriol.">
        <title>Genetic and sequence analysis of an 8.7-kilobase Pseudomonas denitrificans fragment carrying eight genes involved in transformation of precorrin-2 to cobyrinic acid.</title>
        <authorList>
            <person name="Crouzet J."/>
            <person name="Cameron B."/>
            <person name="Cauchois L."/>
            <person name="Rigault S."/>
            <person name="Rouyez M.-C."/>
            <person name="Blanche F."/>
            <person name="Thibaut D."/>
            <person name="Debussche L."/>
        </authorList>
    </citation>
    <scope>NUCLEOTIDE SEQUENCE [GENOMIC DNA]</scope>
    <source>
        <strain>SC510</strain>
    </source>
</reference>
<reference key="2">
    <citation type="journal article" date="1992" name="J. Bacteriol.">
        <title>Biosynthesis of vitamin B12 in Pseudomonas denitrificans: the biosynthetic sequence from precorrin-6y to precorrin-8x is catalyzed by the cobL gene product.</title>
        <authorList>
            <person name="Blanche F."/>
            <person name="Famechon A."/>
            <person name="Thibaut D."/>
            <person name="Debussche L."/>
            <person name="Cameron B."/>
            <person name="Crouzet J."/>
        </authorList>
    </citation>
    <scope>CHARACTERIZATION</scope>
</reference>
<evidence type="ECO:0000305" key="1"/>
<dbReference type="EC" id="2.1.1.132"/>
<dbReference type="EMBL" id="M59301">
    <property type="protein sequence ID" value="AAA25800.1"/>
    <property type="molecule type" value="Genomic_DNA"/>
</dbReference>
<dbReference type="SMR" id="P21921"/>
<dbReference type="KEGG" id="ag:AAA25800"/>
<dbReference type="BioCyc" id="MetaCyc:MONOMER-114"/>
<dbReference type="UniPathway" id="UPA00148">
    <property type="reaction ID" value="UER00218"/>
</dbReference>
<dbReference type="GO" id="GO:0046025">
    <property type="term" value="F:precorrin-6Y C5,15-methyltransferase (decarboxylating) activity"/>
    <property type="evidence" value="ECO:0007669"/>
    <property type="project" value="UniProtKB-EC"/>
</dbReference>
<dbReference type="GO" id="GO:0008276">
    <property type="term" value="F:protein methyltransferase activity"/>
    <property type="evidence" value="ECO:0007669"/>
    <property type="project" value="InterPro"/>
</dbReference>
<dbReference type="GO" id="GO:0009236">
    <property type="term" value="P:cobalamin biosynthetic process"/>
    <property type="evidence" value="ECO:0007669"/>
    <property type="project" value="UniProtKB-UniPathway"/>
</dbReference>
<dbReference type="GO" id="GO:0032259">
    <property type="term" value="P:methylation"/>
    <property type="evidence" value="ECO:0007669"/>
    <property type="project" value="UniProtKB-KW"/>
</dbReference>
<dbReference type="CDD" id="cd11644">
    <property type="entry name" value="Precorrin-6Y-MT"/>
    <property type="match status" value="1"/>
</dbReference>
<dbReference type="Gene3D" id="3.40.1010.10">
    <property type="entry name" value="Cobalt-precorrin-4 Transmethylase, Domain 1"/>
    <property type="match status" value="1"/>
</dbReference>
<dbReference type="Gene3D" id="3.30.950.10">
    <property type="entry name" value="Methyltransferase, Cobalt-precorrin-4 Transmethylase, Domain 2"/>
    <property type="match status" value="1"/>
</dbReference>
<dbReference type="Gene3D" id="3.40.50.150">
    <property type="entry name" value="Vaccinia Virus protein VP39"/>
    <property type="match status" value="1"/>
</dbReference>
<dbReference type="InterPro" id="IPR000878">
    <property type="entry name" value="4pyrrol_Mease"/>
</dbReference>
<dbReference type="InterPro" id="IPR035996">
    <property type="entry name" value="4pyrrol_Methylase_sf"/>
</dbReference>
<dbReference type="InterPro" id="IPR014777">
    <property type="entry name" value="4pyrrole_Mease_sub1"/>
</dbReference>
<dbReference type="InterPro" id="IPR014776">
    <property type="entry name" value="4pyrrole_Mease_sub2"/>
</dbReference>
<dbReference type="InterPro" id="IPR012818">
    <property type="entry name" value="CbiE"/>
</dbReference>
<dbReference type="InterPro" id="IPR006365">
    <property type="entry name" value="Cbl_synth_CobL"/>
</dbReference>
<dbReference type="InterPro" id="IPR014008">
    <property type="entry name" value="Cbl_synth_MTase_CbiT"/>
</dbReference>
<dbReference type="InterPro" id="IPR050714">
    <property type="entry name" value="Cobalamin_biosynth_MTase"/>
</dbReference>
<dbReference type="InterPro" id="IPR029063">
    <property type="entry name" value="SAM-dependent_MTases_sf"/>
</dbReference>
<dbReference type="NCBIfam" id="TIGR02467">
    <property type="entry name" value="CbiE"/>
    <property type="match status" value="1"/>
</dbReference>
<dbReference type="NCBIfam" id="TIGR02469">
    <property type="entry name" value="CbiT"/>
    <property type="match status" value="1"/>
</dbReference>
<dbReference type="PANTHER" id="PTHR43182">
    <property type="entry name" value="COBALT-PRECORRIN-6B C(15)-METHYLTRANSFERASE (DECARBOXYLATING)"/>
    <property type="match status" value="1"/>
</dbReference>
<dbReference type="PANTHER" id="PTHR43182:SF1">
    <property type="entry name" value="COBALT-PRECORRIN-7 C(5)-METHYLTRANSFERASE"/>
    <property type="match status" value="1"/>
</dbReference>
<dbReference type="Pfam" id="PF00590">
    <property type="entry name" value="TP_methylase"/>
    <property type="match status" value="1"/>
</dbReference>
<dbReference type="PIRSF" id="PIRSF036428">
    <property type="entry name" value="CobL"/>
    <property type="match status" value="1"/>
</dbReference>
<dbReference type="SUPFAM" id="SSF53335">
    <property type="entry name" value="S-adenosyl-L-methionine-dependent methyltransferases"/>
    <property type="match status" value="1"/>
</dbReference>
<dbReference type="SUPFAM" id="SSF53790">
    <property type="entry name" value="Tetrapyrrole methylase"/>
    <property type="match status" value="1"/>
</dbReference>
<organism>
    <name type="scientific">Sinorhizobium sp</name>
    <dbReference type="NCBI Taxonomy" id="42445"/>
    <lineage>
        <taxon>Bacteria</taxon>
        <taxon>Pseudomonadati</taxon>
        <taxon>Pseudomonadota</taxon>
        <taxon>Alphaproteobacteria</taxon>
        <taxon>Hyphomicrobiales</taxon>
        <taxon>Rhizobiaceae</taxon>
        <taxon>Sinorhizobium/Ensifer group</taxon>
        <taxon>Sinorhizobium</taxon>
    </lineage>
</organism>
<accession>P21921</accession>
<keyword id="KW-0169">Cobalamin biosynthesis</keyword>
<keyword id="KW-0489">Methyltransferase</keyword>
<keyword id="KW-0949">S-adenosyl-L-methionine</keyword>
<keyword id="KW-0808">Transferase</keyword>
<gene>
    <name type="primary">cobL</name>
</gene>